<accession>Q7MTC4</accession>
<evidence type="ECO:0000255" key="1">
    <source>
        <dbReference type="HAMAP-Rule" id="MF_01161"/>
    </source>
</evidence>
<dbReference type="EC" id="6.3.4.19" evidence="1"/>
<dbReference type="EMBL" id="AE015924">
    <property type="protein sequence ID" value="AAQ67010.1"/>
    <property type="molecule type" value="Genomic_DNA"/>
</dbReference>
<dbReference type="RefSeq" id="WP_005874428.1">
    <property type="nucleotide sequence ID" value="NC_002950.2"/>
</dbReference>
<dbReference type="SMR" id="Q7MTC4"/>
<dbReference type="STRING" id="242619.PG_2046"/>
<dbReference type="EnsemblBacteria" id="AAQ67010">
    <property type="protein sequence ID" value="AAQ67010"/>
    <property type="gene ID" value="PG_2046"/>
</dbReference>
<dbReference type="KEGG" id="pgi:PG_2046"/>
<dbReference type="eggNOG" id="COG0037">
    <property type="taxonomic scope" value="Bacteria"/>
</dbReference>
<dbReference type="HOGENOM" id="CLU_018869_0_1_10"/>
<dbReference type="Proteomes" id="UP000000588">
    <property type="component" value="Chromosome"/>
</dbReference>
<dbReference type="GO" id="GO:0005737">
    <property type="term" value="C:cytoplasm"/>
    <property type="evidence" value="ECO:0007669"/>
    <property type="project" value="UniProtKB-SubCell"/>
</dbReference>
<dbReference type="GO" id="GO:0005524">
    <property type="term" value="F:ATP binding"/>
    <property type="evidence" value="ECO:0007669"/>
    <property type="project" value="UniProtKB-UniRule"/>
</dbReference>
<dbReference type="GO" id="GO:0032267">
    <property type="term" value="F:tRNA(Ile)-lysidine synthase activity"/>
    <property type="evidence" value="ECO:0007669"/>
    <property type="project" value="UniProtKB-EC"/>
</dbReference>
<dbReference type="GO" id="GO:0006400">
    <property type="term" value="P:tRNA modification"/>
    <property type="evidence" value="ECO:0007669"/>
    <property type="project" value="UniProtKB-UniRule"/>
</dbReference>
<dbReference type="CDD" id="cd01992">
    <property type="entry name" value="TilS_N"/>
    <property type="match status" value="1"/>
</dbReference>
<dbReference type="Gene3D" id="3.40.50.620">
    <property type="entry name" value="HUPs"/>
    <property type="match status" value="1"/>
</dbReference>
<dbReference type="HAMAP" id="MF_01161">
    <property type="entry name" value="tRNA_Ile_lys_synt"/>
    <property type="match status" value="1"/>
</dbReference>
<dbReference type="InterPro" id="IPR012796">
    <property type="entry name" value="Lysidine-tRNA-synth_C"/>
</dbReference>
<dbReference type="InterPro" id="IPR014729">
    <property type="entry name" value="Rossmann-like_a/b/a_fold"/>
</dbReference>
<dbReference type="InterPro" id="IPR011063">
    <property type="entry name" value="TilS/TtcA_N"/>
</dbReference>
<dbReference type="InterPro" id="IPR012094">
    <property type="entry name" value="tRNA_Ile_lys_synt"/>
</dbReference>
<dbReference type="InterPro" id="IPR012795">
    <property type="entry name" value="tRNA_Ile_lys_synt_N"/>
</dbReference>
<dbReference type="NCBIfam" id="TIGR02433">
    <property type="entry name" value="lysidine_TilS_C"/>
    <property type="match status" value="1"/>
</dbReference>
<dbReference type="NCBIfam" id="TIGR02432">
    <property type="entry name" value="lysidine_TilS_N"/>
    <property type="match status" value="1"/>
</dbReference>
<dbReference type="PANTHER" id="PTHR43033">
    <property type="entry name" value="TRNA(ILE)-LYSIDINE SYNTHASE-RELATED"/>
    <property type="match status" value="1"/>
</dbReference>
<dbReference type="PANTHER" id="PTHR43033:SF1">
    <property type="entry name" value="TRNA(ILE)-LYSIDINE SYNTHASE-RELATED"/>
    <property type="match status" value="1"/>
</dbReference>
<dbReference type="Pfam" id="PF01171">
    <property type="entry name" value="ATP_bind_3"/>
    <property type="match status" value="1"/>
</dbReference>
<dbReference type="Pfam" id="PF11734">
    <property type="entry name" value="TilS_C"/>
    <property type="match status" value="1"/>
</dbReference>
<dbReference type="SMART" id="SM00977">
    <property type="entry name" value="TilS_C"/>
    <property type="match status" value="1"/>
</dbReference>
<dbReference type="SUPFAM" id="SSF52402">
    <property type="entry name" value="Adenine nucleotide alpha hydrolases-like"/>
    <property type="match status" value="1"/>
</dbReference>
<dbReference type="SUPFAM" id="SSF56037">
    <property type="entry name" value="PheT/TilS domain"/>
    <property type="match status" value="1"/>
</dbReference>
<comment type="function">
    <text evidence="1">Ligates lysine onto the cytidine present at position 34 of the AUA codon-specific tRNA(Ile) that contains the anticodon CAU, in an ATP-dependent manner. Cytidine is converted to lysidine, thus changing the amino acid specificity of the tRNA from methionine to isoleucine.</text>
</comment>
<comment type="catalytic activity">
    <reaction evidence="1">
        <text>cytidine(34) in tRNA(Ile2) + L-lysine + ATP = lysidine(34) in tRNA(Ile2) + AMP + diphosphate + H(+)</text>
        <dbReference type="Rhea" id="RHEA:43744"/>
        <dbReference type="Rhea" id="RHEA-COMP:10625"/>
        <dbReference type="Rhea" id="RHEA-COMP:10670"/>
        <dbReference type="ChEBI" id="CHEBI:15378"/>
        <dbReference type="ChEBI" id="CHEBI:30616"/>
        <dbReference type="ChEBI" id="CHEBI:32551"/>
        <dbReference type="ChEBI" id="CHEBI:33019"/>
        <dbReference type="ChEBI" id="CHEBI:82748"/>
        <dbReference type="ChEBI" id="CHEBI:83665"/>
        <dbReference type="ChEBI" id="CHEBI:456215"/>
        <dbReference type="EC" id="6.3.4.19"/>
    </reaction>
</comment>
<comment type="subcellular location">
    <subcellularLocation>
        <location evidence="1">Cytoplasm</location>
    </subcellularLocation>
</comment>
<comment type="domain">
    <text>The N-terminal region contains the highly conserved SGGXDS motif, predicted to be a P-loop motif involved in ATP binding.</text>
</comment>
<comment type="similarity">
    <text evidence="1">Belongs to the tRNA(Ile)-lysidine synthase family.</text>
</comment>
<keyword id="KW-0067">ATP-binding</keyword>
<keyword id="KW-0963">Cytoplasm</keyword>
<keyword id="KW-0436">Ligase</keyword>
<keyword id="KW-0547">Nucleotide-binding</keyword>
<keyword id="KW-1185">Reference proteome</keyword>
<keyword id="KW-0819">tRNA processing</keyword>
<proteinExistence type="inferred from homology"/>
<name>TILS_PORGI</name>
<sequence length="454" mass="52066">MKISLTNRVRTTIRERKLFREGDRLVLVALSGGADSVALLCVLRELGYETVAAHCNFHLRGVESDEDAAFVERLCRDLDVPLHRIDFDTVRYARERSISIEMAARELRYEWFGQLRKELAIEYVAVAHHADDNAETMVLNLCRGTGISGLCGMPYKRNDGIVRPLLDATRDEIEAYLLDQKITYRTDSSNEDTRFRRNLVRHRIMPLLKELNPSLQEALLRTRENLEGVAAFYSKATEDFHNTLRATSSISIREVKETPAPFTLLYDLLHPYGFNRDQIREVATSLDNPPGASFFSSSHRLLRERDRLTVLPLSPKMEVPELFGLKIGDSFLDLPDGKQLSWQRGTPADLDLEGLRLPNTKLLLPLAFVESLQEELGVRRPQRGDHIHPYGMKGCKTVSRFFIDRHVPRSRREEAWLLCQGTEVVWIMGYAADRRFAIDELSDTEEYLLFSFGL</sequence>
<reference key="1">
    <citation type="journal article" date="2003" name="J. Bacteriol.">
        <title>Complete genome sequence of the oral pathogenic bacterium Porphyromonas gingivalis strain W83.</title>
        <authorList>
            <person name="Nelson K.E."/>
            <person name="Fleischmann R.D."/>
            <person name="DeBoy R.T."/>
            <person name="Paulsen I.T."/>
            <person name="Fouts D.E."/>
            <person name="Eisen J.A."/>
            <person name="Daugherty S.C."/>
            <person name="Dodson R.J."/>
            <person name="Durkin A.S."/>
            <person name="Gwinn M.L."/>
            <person name="Haft D.H."/>
            <person name="Kolonay J.F."/>
            <person name="Nelson W.C."/>
            <person name="Mason T.M."/>
            <person name="Tallon L."/>
            <person name="Gray J."/>
            <person name="Granger D."/>
            <person name="Tettelin H."/>
            <person name="Dong H."/>
            <person name="Galvin J.L."/>
            <person name="Duncan M.J."/>
            <person name="Dewhirst F.E."/>
            <person name="Fraser C.M."/>
        </authorList>
    </citation>
    <scope>NUCLEOTIDE SEQUENCE [LARGE SCALE GENOMIC DNA]</scope>
    <source>
        <strain>ATCC BAA-308 / W83</strain>
    </source>
</reference>
<protein>
    <recommendedName>
        <fullName evidence="1">tRNA(Ile)-lysidine synthase</fullName>
        <ecNumber evidence="1">6.3.4.19</ecNumber>
    </recommendedName>
    <alternativeName>
        <fullName evidence="1">tRNA(Ile)-2-lysyl-cytidine synthase</fullName>
    </alternativeName>
    <alternativeName>
        <fullName evidence="1">tRNA(Ile)-lysidine synthetase</fullName>
    </alternativeName>
</protein>
<gene>
    <name evidence="1" type="primary">tilS</name>
    <name type="ordered locus">PG_2046</name>
</gene>
<feature type="chain" id="PRO_0000181743" description="tRNA(Ile)-lysidine synthase">
    <location>
        <begin position="1"/>
        <end position="454"/>
    </location>
</feature>
<feature type="binding site" evidence="1">
    <location>
        <begin position="31"/>
        <end position="36"/>
    </location>
    <ligand>
        <name>ATP</name>
        <dbReference type="ChEBI" id="CHEBI:30616"/>
    </ligand>
</feature>
<organism>
    <name type="scientific">Porphyromonas gingivalis (strain ATCC BAA-308 / W83)</name>
    <dbReference type="NCBI Taxonomy" id="242619"/>
    <lineage>
        <taxon>Bacteria</taxon>
        <taxon>Pseudomonadati</taxon>
        <taxon>Bacteroidota</taxon>
        <taxon>Bacteroidia</taxon>
        <taxon>Bacteroidales</taxon>
        <taxon>Porphyromonadaceae</taxon>
        <taxon>Porphyromonas</taxon>
    </lineage>
</organism>